<protein>
    <recommendedName>
        <fullName>Pre-mRNA-splicing factor CWC22</fullName>
    </recommendedName>
</protein>
<feature type="chain" id="PRO_0000215671" description="Pre-mRNA-splicing factor CWC22">
    <location>
        <begin position="1"/>
        <end position="637"/>
    </location>
</feature>
<feature type="domain" description="MIF4G" evidence="2">
    <location>
        <begin position="53"/>
        <end position="236"/>
    </location>
</feature>
<feature type="domain" description="MI" evidence="2">
    <location>
        <begin position="331"/>
        <end position="453"/>
    </location>
</feature>
<feature type="region of interest" description="Disordered" evidence="3">
    <location>
        <begin position="538"/>
        <end position="637"/>
    </location>
</feature>
<feature type="compositionally biased region" description="Low complexity" evidence="3">
    <location>
        <begin position="548"/>
        <end position="576"/>
    </location>
</feature>
<feature type="compositionally biased region" description="Basic residues" evidence="3">
    <location>
        <begin position="577"/>
        <end position="593"/>
    </location>
</feature>
<feature type="compositionally biased region" description="Low complexity" evidence="3">
    <location>
        <begin position="614"/>
        <end position="626"/>
    </location>
</feature>
<name>CWC22_DEBHA</name>
<comment type="function">
    <text evidence="1">Involved in pre-mRNA splicing.</text>
</comment>
<comment type="subunit">
    <text evidence="1">Associated with the spliceosome.</text>
</comment>
<comment type="subcellular location">
    <subcellularLocation>
        <location evidence="1">Cytoplasm</location>
    </subcellularLocation>
    <subcellularLocation>
        <location evidence="1">Nucleus</location>
    </subcellularLocation>
</comment>
<comment type="similarity">
    <text evidence="4">Belongs to the CWC22 family.</text>
</comment>
<gene>
    <name type="primary">CWC22</name>
    <name type="ordered locus">DEHA2C12870g</name>
</gene>
<keyword id="KW-0963">Cytoplasm</keyword>
<keyword id="KW-0507">mRNA processing</keyword>
<keyword id="KW-0508">mRNA splicing</keyword>
<keyword id="KW-0539">Nucleus</keyword>
<keyword id="KW-1185">Reference proteome</keyword>
<keyword id="KW-0747">Spliceosome</keyword>
<sequence length="637" mass="73844">MSNNSAEYKELLDLKSSGKYVPPAKLKALQTKINNSSESTTEEYQVLQWEQLKRAINRQVNKCNVSNIREIVVELFKLNLQRGKGLLIRSIMKAQLTDLIFTPIYASLIAVLNSKIPEVGELILNRLLLQFRKNYIKNKKNCISSAIFIVHLINQRVCSEILILQILQLLLENPTNDSIEICVEIMNQVGKYLQENSVAANNMIFNRLRSILHENEDINDRSQFLIENLFKTRKNGYSEYPIIRKELDLVDLDDQETHLLELDAKVKSNDQLNIFQFDEQYDENEKLYDNVRKDILGDSDEEDDESEAEESEEDNKEILEIKDMTESNLLNYQKTVYLTVMSSMSSDEAVHKLIKLNFKKSNEEKYKNNEILVDMIIKCCSQEKTYSKYYGVIGEKLCSMNKSWHTIFIDTFKKYYSTIHQFETNSLRNIGKFFGHLFASDKLAIERSWNVIRLTEEETNSASRIFIKFIFQEMIEEIGIKGLQERLDDDLIRQETNGLFPRQGVTYRNAEDIRFSINFFTAIGLGILTEEMRDVLKNLPPEERGRSRSVSGSSRSGSSSYSRSRSYSRSSGSYSRSRSRSRSRSRSRSRTGSRGRTMSRDRSKSFSRSRSTSRSRGESFSRSPSRLPTGSKRFKPN</sequence>
<proteinExistence type="inferred from homology"/>
<evidence type="ECO:0000250" key="1"/>
<evidence type="ECO:0000255" key="2">
    <source>
        <dbReference type="PROSITE-ProRule" id="PRU00698"/>
    </source>
</evidence>
<evidence type="ECO:0000256" key="3">
    <source>
        <dbReference type="SAM" id="MobiDB-lite"/>
    </source>
</evidence>
<evidence type="ECO:0000305" key="4"/>
<dbReference type="EMBL" id="CR382135">
    <property type="protein sequence ID" value="CAG86311.2"/>
    <property type="molecule type" value="Genomic_DNA"/>
</dbReference>
<dbReference type="RefSeq" id="XP_458235.2">
    <property type="nucleotide sequence ID" value="XM_458235.1"/>
</dbReference>
<dbReference type="SMR" id="Q6BU84"/>
<dbReference type="FunCoup" id="Q6BU84">
    <property type="interactions" value="957"/>
</dbReference>
<dbReference type="STRING" id="284592.Q6BU84"/>
<dbReference type="GeneID" id="2900736"/>
<dbReference type="KEGG" id="dha:DEHA2C12870g"/>
<dbReference type="VEuPathDB" id="FungiDB:DEHA2C12870g"/>
<dbReference type="eggNOG" id="KOG2140">
    <property type="taxonomic scope" value="Eukaryota"/>
</dbReference>
<dbReference type="HOGENOM" id="CLU_006308_3_4_1"/>
<dbReference type="InParanoid" id="Q6BU84"/>
<dbReference type="OMA" id="ILTEDMR"/>
<dbReference type="OrthoDB" id="3938623at2759"/>
<dbReference type="Proteomes" id="UP000000599">
    <property type="component" value="Chromosome C"/>
</dbReference>
<dbReference type="GO" id="GO:0071013">
    <property type="term" value="C:catalytic step 2 spliceosome"/>
    <property type="evidence" value="ECO:0007669"/>
    <property type="project" value="TreeGrafter"/>
</dbReference>
<dbReference type="GO" id="GO:0005737">
    <property type="term" value="C:cytoplasm"/>
    <property type="evidence" value="ECO:0007669"/>
    <property type="project" value="UniProtKB-SubCell"/>
</dbReference>
<dbReference type="GO" id="GO:0003723">
    <property type="term" value="F:RNA binding"/>
    <property type="evidence" value="ECO:0007669"/>
    <property type="project" value="InterPro"/>
</dbReference>
<dbReference type="GO" id="GO:0000398">
    <property type="term" value="P:mRNA splicing, via spliceosome"/>
    <property type="evidence" value="ECO:0007669"/>
    <property type="project" value="TreeGrafter"/>
</dbReference>
<dbReference type="Gene3D" id="1.25.40.180">
    <property type="match status" value="1"/>
</dbReference>
<dbReference type="InterPro" id="IPR016024">
    <property type="entry name" value="ARM-type_fold"/>
</dbReference>
<dbReference type="InterPro" id="IPR050781">
    <property type="entry name" value="CWC22_splicing_factor"/>
</dbReference>
<dbReference type="InterPro" id="IPR003891">
    <property type="entry name" value="Initiation_fac_eIF4g_MI"/>
</dbReference>
<dbReference type="InterPro" id="IPR003890">
    <property type="entry name" value="MIF4G-like_typ-3"/>
</dbReference>
<dbReference type="PANTHER" id="PTHR18034">
    <property type="entry name" value="CELL CYCLE CONTROL PROTEIN CWF22-RELATED"/>
    <property type="match status" value="1"/>
</dbReference>
<dbReference type="PANTHER" id="PTHR18034:SF3">
    <property type="entry name" value="PRE-MRNA-SPLICING FACTOR CWC22 HOMOLOG"/>
    <property type="match status" value="1"/>
</dbReference>
<dbReference type="Pfam" id="PF02847">
    <property type="entry name" value="MA3"/>
    <property type="match status" value="1"/>
</dbReference>
<dbReference type="SMART" id="SM00544">
    <property type="entry name" value="MA3"/>
    <property type="match status" value="1"/>
</dbReference>
<dbReference type="SMART" id="SM00543">
    <property type="entry name" value="MIF4G"/>
    <property type="match status" value="1"/>
</dbReference>
<dbReference type="SUPFAM" id="SSF48371">
    <property type="entry name" value="ARM repeat"/>
    <property type="match status" value="1"/>
</dbReference>
<dbReference type="PROSITE" id="PS51366">
    <property type="entry name" value="MI"/>
    <property type="match status" value="1"/>
</dbReference>
<accession>Q6BU84</accession>
<reference key="1">
    <citation type="journal article" date="2004" name="Nature">
        <title>Genome evolution in yeasts.</title>
        <authorList>
            <person name="Dujon B."/>
            <person name="Sherman D."/>
            <person name="Fischer G."/>
            <person name="Durrens P."/>
            <person name="Casaregola S."/>
            <person name="Lafontaine I."/>
            <person name="de Montigny J."/>
            <person name="Marck C."/>
            <person name="Neuveglise C."/>
            <person name="Talla E."/>
            <person name="Goffard N."/>
            <person name="Frangeul L."/>
            <person name="Aigle M."/>
            <person name="Anthouard V."/>
            <person name="Babour A."/>
            <person name="Barbe V."/>
            <person name="Barnay S."/>
            <person name="Blanchin S."/>
            <person name="Beckerich J.-M."/>
            <person name="Beyne E."/>
            <person name="Bleykasten C."/>
            <person name="Boisrame A."/>
            <person name="Boyer J."/>
            <person name="Cattolico L."/>
            <person name="Confanioleri F."/>
            <person name="de Daruvar A."/>
            <person name="Despons L."/>
            <person name="Fabre E."/>
            <person name="Fairhead C."/>
            <person name="Ferry-Dumazet H."/>
            <person name="Groppi A."/>
            <person name="Hantraye F."/>
            <person name="Hennequin C."/>
            <person name="Jauniaux N."/>
            <person name="Joyet P."/>
            <person name="Kachouri R."/>
            <person name="Kerrest A."/>
            <person name="Koszul R."/>
            <person name="Lemaire M."/>
            <person name="Lesur I."/>
            <person name="Ma L."/>
            <person name="Muller H."/>
            <person name="Nicaud J.-M."/>
            <person name="Nikolski M."/>
            <person name="Oztas S."/>
            <person name="Ozier-Kalogeropoulos O."/>
            <person name="Pellenz S."/>
            <person name="Potier S."/>
            <person name="Richard G.-F."/>
            <person name="Straub M.-L."/>
            <person name="Suleau A."/>
            <person name="Swennen D."/>
            <person name="Tekaia F."/>
            <person name="Wesolowski-Louvel M."/>
            <person name="Westhof E."/>
            <person name="Wirth B."/>
            <person name="Zeniou-Meyer M."/>
            <person name="Zivanovic Y."/>
            <person name="Bolotin-Fukuhara M."/>
            <person name="Thierry A."/>
            <person name="Bouchier C."/>
            <person name="Caudron B."/>
            <person name="Scarpelli C."/>
            <person name="Gaillardin C."/>
            <person name="Weissenbach J."/>
            <person name="Wincker P."/>
            <person name="Souciet J.-L."/>
        </authorList>
    </citation>
    <scope>NUCLEOTIDE SEQUENCE [LARGE SCALE GENOMIC DNA]</scope>
    <source>
        <strain>ATCC 36239 / CBS 767 / BCRC 21394 / JCM 1990 / NBRC 0083 / IGC 2968</strain>
    </source>
</reference>
<organism>
    <name type="scientific">Debaryomyces hansenii (strain ATCC 36239 / CBS 767 / BCRC 21394 / JCM 1990 / NBRC 0083 / IGC 2968)</name>
    <name type="common">Yeast</name>
    <name type="synonym">Torulaspora hansenii</name>
    <dbReference type="NCBI Taxonomy" id="284592"/>
    <lineage>
        <taxon>Eukaryota</taxon>
        <taxon>Fungi</taxon>
        <taxon>Dikarya</taxon>
        <taxon>Ascomycota</taxon>
        <taxon>Saccharomycotina</taxon>
        <taxon>Pichiomycetes</taxon>
        <taxon>Debaryomycetaceae</taxon>
        <taxon>Debaryomyces</taxon>
    </lineage>
</organism>